<proteinExistence type="evidence at transcript level"/>
<comment type="function">
    <text evidence="1">Microtubule plus-end tracking protein that promotes the stabilization of dynamic microtubules. Involved in the nucleation of noncentrosomal microtubules originating from the trans-Golgi network (TGN). Required for the polarization of the cytoplasmic microtubule arrays in migrating cells towards the leading edge of the cell. May act at the cell cortex to enhance the frequency of rescue of depolymerizing microtubules. This cortical microtubule stabilizing activity is regulated at least in part by phosphatidylinositol 3-kinase signaling. Also performs a similar stabilizing function at the kinetochore which is essential for the bipolar alignment of chromosomes on the mitotic spindle.</text>
</comment>
<comment type="subunit">
    <text evidence="1">Interacts with microtubules.</text>
</comment>
<comment type="subcellular location">
    <subcellularLocation>
        <location evidence="1">Cytoplasm</location>
        <location evidence="1">Cytoskeleton</location>
    </subcellularLocation>
    <subcellularLocation>
        <location evidence="1">Cytoplasm</location>
        <location evidence="1">Cytoskeleton</location>
        <location evidence="1">Microtubule organizing center</location>
        <location evidence="1">Centrosome</location>
    </subcellularLocation>
    <subcellularLocation>
        <location evidence="1">Chromosome</location>
        <location evidence="1">Centromere</location>
        <location evidence="1">Kinetochore</location>
    </subcellularLocation>
    <subcellularLocation>
        <location evidence="1">Cytoplasm</location>
        <location evidence="1">Cytoskeleton</location>
        <location evidence="1">Spindle</location>
    </subcellularLocation>
    <subcellularLocation>
        <location evidence="1">Golgi apparatus</location>
    </subcellularLocation>
    <subcellularLocation>
        <location evidence="1">Golgi apparatus</location>
        <location evidence="1">trans-Golgi network</location>
    </subcellularLocation>
    <subcellularLocation>
        <location evidence="1">Cell membrane</location>
    </subcellularLocation>
    <subcellularLocation>
        <location evidence="1">Cell projection</location>
        <location evidence="1">Ruffle membrane</location>
    </subcellularLocation>
    <text evidence="1">Localizes to microtubule plus ends.</text>
</comment>
<comment type="domain">
    <text evidence="1">The two SXIP sequence motifs are important for targeting to the growing microtubule plus ends.</text>
</comment>
<comment type="domain">
    <text evidence="1">Two TOG regions display structural characteristics similar to HEAT repeat domains and mediate interaction with microtubules.</text>
</comment>
<comment type="similarity">
    <text evidence="4">Belongs to the CLASP family.</text>
</comment>
<name>CLAP2_DANRE</name>
<feature type="chain" id="PRO_0000089848" description="CLIP-associating protein 2">
    <location>
        <begin position="1"/>
        <end position="1288"/>
    </location>
</feature>
<feature type="repeat" description="HEAT 1" evidence="2">
    <location>
        <begin position="174"/>
        <end position="209"/>
    </location>
</feature>
<feature type="repeat" description="HEAT 2" evidence="2">
    <location>
        <begin position="210"/>
        <end position="246"/>
    </location>
</feature>
<feature type="repeat" description="HEAT 3" evidence="2">
    <location>
        <begin position="251"/>
        <end position="288"/>
    </location>
</feature>
<feature type="repeat" description="HEAT 4" evidence="2">
    <location>
        <begin position="718"/>
        <end position="755"/>
    </location>
</feature>
<feature type="repeat" description="HEAT 5" evidence="2">
    <location>
        <begin position="780"/>
        <end position="817"/>
    </location>
</feature>
<feature type="repeat" description="HEAT 6" evidence="2">
    <location>
        <begin position="1047"/>
        <end position="1086"/>
    </location>
</feature>
<feature type="repeat" description="HEAT 7" evidence="2">
    <location>
        <begin position="1091"/>
        <end position="1128"/>
    </location>
</feature>
<feature type="repeat" description="HEAT 8" evidence="2">
    <location>
        <begin position="1167"/>
        <end position="1204"/>
    </location>
</feature>
<feature type="repeat" description="HEAT 9" evidence="2">
    <location>
        <begin position="1209"/>
        <end position="1246"/>
    </location>
</feature>
<feature type="region of interest" description="Disordered" evidence="3">
    <location>
        <begin position="1"/>
        <end position="62"/>
    </location>
</feature>
<feature type="region of interest" description="TOG 1" evidence="1">
    <location>
        <begin position="62"/>
        <end position="312"/>
    </location>
</feature>
<feature type="region of interest" description="Disordered" evidence="3">
    <location>
        <begin position="314"/>
        <end position="571"/>
    </location>
</feature>
<feature type="region of interest" description="Disordered" evidence="3">
    <location>
        <begin position="614"/>
        <end position="634"/>
    </location>
</feature>
<feature type="region of interest" description="TOG 2" evidence="1">
    <location>
        <begin position="638"/>
        <end position="889"/>
    </location>
</feature>
<feature type="region of interest" description="Disordered" evidence="3">
    <location>
        <begin position="891"/>
        <end position="936"/>
    </location>
</feature>
<feature type="region of interest" description="Disordered" evidence="3">
    <location>
        <begin position="960"/>
        <end position="1047"/>
    </location>
</feature>
<feature type="short sequence motif" description="SXIP motif 1" evidence="1 4">
    <location>
        <begin position="490"/>
        <end position="493"/>
    </location>
</feature>
<feature type="short sequence motif" description="SXIP motif 2" evidence="1 4">
    <location>
        <begin position="527"/>
        <end position="530"/>
    </location>
</feature>
<feature type="compositionally biased region" description="Low complexity" evidence="3">
    <location>
        <begin position="19"/>
        <end position="32"/>
    </location>
</feature>
<feature type="compositionally biased region" description="Low complexity" evidence="3">
    <location>
        <begin position="40"/>
        <end position="62"/>
    </location>
</feature>
<feature type="compositionally biased region" description="Low complexity" evidence="3">
    <location>
        <begin position="317"/>
        <end position="337"/>
    </location>
</feature>
<feature type="compositionally biased region" description="Low complexity" evidence="3">
    <location>
        <begin position="347"/>
        <end position="358"/>
    </location>
</feature>
<feature type="compositionally biased region" description="Polar residues" evidence="3">
    <location>
        <begin position="406"/>
        <end position="421"/>
    </location>
</feature>
<feature type="compositionally biased region" description="Polar residues" evidence="3">
    <location>
        <begin position="468"/>
        <end position="478"/>
    </location>
</feature>
<feature type="compositionally biased region" description="Polar residues" evidence="3">
    <location>
        <begin position="496"/>
        <end position="518"/>
    </location>
</feature>
<feature type="compositionally biased region" description="Low complexity" evidence="3">
    <location>
        <begin position="616"/>
        <end position="630"/>
    </location>
</feature>
<feature type="compositionally biased region" description="Polar residues" evidence="3">
    <location>
        <begin position="891"/>
        <end position="900"/>
    </location>
</feature>
<feature type="compositionally biased region" description="Low complexity" evidence="3">
    <location>
        <begin position="912"/>
        <end position="931"/>
    </location>
</feature>
<feature type="compositionally biased region" description="Basic and acidic residues" evidence="3">
    <location>
        <begin position="963"/>
        <end position="977"/>
    </location>
</feature>
<feature type="compositionally biased region" description="Low complexity" evidence="3">
    <location>
        <begin position="1019"/>
        <end position="1030"/>
    </location>
</feature>
<feature type="compositionally biased region" description="Acidic residues" evidence="3">
    <location>
        <begin position="1036"/>
        <end position="1046"/>
    </location>
</feature>
<gene>
    <name type="primary">clasp2</name>
</gene>
<protein>
    <recommendedName>
        <fullName>CLIP-associating protein 2</fullName>
    </recommendedName>
    <alternativeName>
        <fullName>Cytoplasmic linker-associated protein 2</fullName>
    </alternativeName>
</protein>
<accession>Q6NYW6</accession>
<evidence type="ECO:0000250" key="1">
    <source>
        <dbReference type="UniProtKB" id="O75122"/>
    </source>
</evidence>
<evidence type="ECO:0000255" key="2"/>
<evidence type="ECO:0000256" key="3">
    <source>
        <dbReference type="SAM" id="MobiDB-lite"/>
    </source>
</evidence>
<evidence type="ECO:0000305" key="4"/>
<organism>
    <name type="scientific">Danio rerio</name>
    <name type="common">Zebrafish</name>
    <name type="synonym">Brachydanio rerio</name>
    <dbReference type="NCBI Taxonomy" id="7955"/>
    <lineage>
        <taxon>Eukaryota</taxon>
        <taxon>Metazoa</taxon>
        <taxon>Chordata</taxon>
        <taxon>Craniata</taxon>
        <taxon>Vertebrata</taxon>
        <taxon>Euteleostomi</taxon>
        <taxon>Actinopterygii</taxon>
        <taxon>Neopterygii</taxon>
        <taxon>Teleostei</taxon>
        <taxon>Ostariophysi</taxon>
        <taxon>Cypriniformes</taxon>
        <taxon>Danionidae</taxon>
        <taxon>Danioninae</taxon>
        <taxon>Danio</taxon>
    </lineage>
</organism>
<reference key="1">
    <citation type="submission" date="2004-02" db="EMBL/GenBank/DDBJ databases">
        <authorList>
            <consortium name="NIH - Zebrafish Gene Collection (ZGC) project"/>
        </authorList>
    </citation>
    <scope>NUCLEOTIDE SEQUENCE [LARGE SCALE MRNA]</scope>
    <source>
        <tissue>Embryo</tissue>
    </source>
</reference>
<sequence>MALSLSQDRSFDDDDSVDGSRPSSAQAAFKVPKVPKKPAESASSSRRPSATGAAKSGASKEGAGAVDEEDFIKAFTDVPTVQIYSTRDLEDNLNKIREVLSDDKHDWDHRANALKKIRSLLVAGATDYDCFYQHLRLLDGAFKLSAKDLRSQVVREACITVAYLSTLLGNKFDHGAEGIVPVLFNLIPNCAKVMATSGTAAIRIIIRHTHVPRLIPLIASNCTSKSVAVRRRCYEFLDLLLQEWQTHSLERHAAVLVESIKKGIRDADAEARVEARKAYWGLRAHFPGEAESLYNSLESSYQRTLQSCLKSSGSVASLPQSDRSSSSSQESLNRPLSKWSAAPGRVPAGSKSSGSPASLQRSRSDVDVNAAAGAKARHSGQAGGAGRVTTGLTPGSYASLGRLRTKQTLSTASSVGSSQVDSRGRTRSKMASQSQRSDDSDCTPGSQSATPVGAGSRSGSPGRVLASTALSTLSTGAQRVSAAPGSHRRSRIPRSQGCSRDSSPTRLSVAPSNISHIYNGSKGARGSRIPRPSVSQGCSREASRESSRDTSPVRSFTPLGSGLGMSQSSRLSSSVSAMRVLNTGSDVEEALADALKKPARRRYDTYGMYSDDDANSDASSACSERSYSSRNGSIPTYMRQTEDVAEVLNRCASANWSERKEGLMGLQALLKNHRTLSRVELKRLCEIFTRMFADPHSKRDPRGFGTVESGISSASFKRVFSMFLETLVDFIAVHKEDLQDWLFVLLTQLLKKMGADLLGSVQAKVQKALDVTRESFPNDLQFTILMRFTVDQTQTPNLKVKVAILKYIETLTLQMEPQDFVNTGETRLAVSRIITWTTEPKSSDVRKAAQSVLISLFQLNTPEFTMLLGALPKTFQDGATKLLQNHLRNTGNTAQASIGSPLTRHTPRSPASWSSPLTSPTNTSQNTPSPSAFDYDTENMNSEEIYSSLRGVSQAIQNFSVRSQEDMTEPPRKREGDGGEETVDSGRTALDNKTSLLNTMPLLSSSPRPSRDYQPVNYSDSSFGSSSFNKSLKDADQEESLTDDSGVDQSEVVAELLKELSNHSERVEERKAALCELMRLIRETQLHVWDEHFKTILLLLLETLGDGEHVIRALALRVLKEILNRQPWRFKNYAELTIMKALEAHKDPHKEVVRAAEEAASMLATSISPDQCIKVLCPIIQSADYPINLAAIKMLTKVIDRLPKEGLIQMLPEIVPGLIQGYDNSESSVRKACVFCLVAIYAVIGEDLKPHLSQLSGSKLKLLNLYIKRAQSGSSGSDQSSDVGGQGL</sequence>
<keyword id="KW-0131">Cell cycle</keyword>
<keyword id="KW-0132">Cell division</keyword>
<keyword id="KW-1003">Cell membrane</keyword>
<keyword id="KW-0966">Cell projection</keyword>
<keyword id="KW-0137">Centromere</keyword>
<keyword id="KW-0158">Chromosome</keyword>
<keyword id="KW-0963">Cytoplasm</keyword>
<keyword id="KW-0206">Cytoskeleton</keyword>
<keyword id="KW-0333">Golgi apparatus</keyword>
<keyword id="KW-0995">Kinetochore</keyword>
<keyword id="KW-0472">Membrane</keyword>
<keyword id="KW-0493">Microtubule</keyword>
<keyword id="KW-0498">Mitosis</keyword>
<keyword id="KW-1185">Reference proteome</keyword>
<keyword id="KW-0677">Repeat</keyword>
<dbReference type="EMBL" id="BC066436">
    <property type="protein sequence ID" value="AAH66436.1"/>
    <property type="molecule type" value="mRNA"/>
</dbReference>
<dbReference type="RefSeq" id="NP_996955.1">
    <property type="nucleotide sequence ID" value="NM_207072.2"/>
</dbReference>
<dbReference type="FunCoup" id="Q6NYW6">
    <property type="interactions" value="1608"/>
</dbReference>
<dbReference type="STRING" id="7955.ENSDARP00000117340"/>
<dbReference type="PaxDb" id="7955-ENSDARP00000039870"/>
<dbReference type="Ensembl" id="ENSDART00000144557">
    <property type="protein sequence ID" value="ENSDARP00000113962"/>
    <property type="gene ID" value="ENSDARG00000020345"/>
</dbReference>
<dbReference type="GeneID" id="404604"/>
<dbReference type="KEGG" id="dre:404604"/>
<dbReference type="AGR" id="ZFIN:ZDB-GENE-040426-2343"/>
<dbReference type="CTD" id="23122"/>
<dbReference type="ZFIN" id="ZDB-GENE-040426-2343">
    <property type="gene designation" value="clasp2"/>
</dbReference>
<dbReference type="eggNOG" id="KOG2956">
    <property type="taxonomic scope" value="Eukaryota"/>
</dbReference>
<dbReference type="InParanoid" id="Q6NYW6"/>
<dbReference type="OrthoDB" id="46159at2759"/>
<dbReference type="PhylomeDB" id="Q6NYW6"/>
<dbReference type="PRO" id="PR:Q6NYW6"/>
<dbReference type="Proteomes" id="UP000000437">
    <property type="component" value="Chromosome 19"/>
</dbReference>
<dbReference type="Bgee" id="ENSDARG00000020345">
    <property type="expression patterns" value="Expressed in retina and 26 other cell types or tissues"/>
</dbReference>
<dbReference type="ExpressionAtlas" id="Q6NYW6">
    <property type="expression patterns" value="baseline and differential"/>
</dbReference>
<dbReference type="GO" id="GO:0045180">
    <property type="term" value="C:basal cortex"/>
    <property type="evidence" value="ECO:0000318"/>
    <property type="project" value="GO_Central"/>
</dbReference>
<dbReference type="GO" id="GO:0031252">
    <property type="term" value="C:cell leading edge"/>
    <property type="evidence" value="ECO:0000250"/>
    <property type="project" value="UniProtKB"/>
</dbReference>
<dbReference type="GO" id="GO:0005813">
    <property type="term" value="C:centrosome"/>
    <property type="evidence" value="ECO:0007669"/>
    <property type="project" value="UniProtKB-SubCell"/>
</dbReference>
<dbReference type="GO" id="GO:0005881">
    <property type="term" value="C:cytoplasmic microtubule"/>
    <property type="evidence" value="ECO:0000250"/>
    <property type="project" value="UniProtKB"/>
</dbReference>
<dbReference type="GO" id="GO:0005794">
    <property type="term" value="C:Golgi apparatus"/>
    <property type="evidence" value="ECO:0000250"/>
    <property type="project" value="UniProtKB"/>
</dbReference>
<dbReference type="GO" id="GO:0000776">
    <property type="term" value="C:kinetochore"/>
    <property type="evidence" value="ECO:0000318"/>
    <property type="project" value="GO_Central"/>
</dbReference>
<dbReference type="GO" id="GO:0005874">
    <property type="term" value="C:microtubule"/>
    <property type="evidence" value="ECO:0000250"/>
    <property type="project" value="UniProtKB"/>
</dbReference>
<dbReference type="GO" id="GO:0005815">
    <property type="term" value="C:microtubule organizing center"/>
    <property type="evidence" value="ECO:0000318"/>
    <property type="project" value="GO_Central"/>
</dbReference>
<dbReference type="GO" id="GO:0072686">
    <property type="term" value="C:mitotic spindle"/>
    <property type="evidence" value="ECO:0000318"/>
    <property type="project" value="GO_Central"/>
</dbReference>
<dbReference type="GO" id="GO:0032587">
    <property type="term" value="C:ruffle membrane"/>
    <property type="evidence" value="ECO:0000250"/>
    <property type="project" value="UniProtKB"/>
</dbReference>
<dbReference type="GO" id="GO:0005876">
    <property type="term" value="C:spindle microtubule"/>
    <property type="evidence" value="ECO:0000318"/>
    <property type="project" value="GO_Central"/>
</dbReference>
<dbReference type="GO" id="GO:0005802">
    <property type="term" value="C:trans-Golgi network"/>
    <property type="evidence" value="ECO:0000250"/>
    <property type="project" value="UniProtKB"/>
</dbReference>
<dbReference type="GO" id="GO:0008017">
    <property type="term" value="F:microtubule binding"/>
    <property type="evidence" value="ECO:0000250"/>
    <property type="project" value="UniProtKB"/>
</dbReference>
<dbReference type="GO" id="GO:0051010">
    <property type="term" value="F:microtubule plus-end binding"/>
    <property type="evidence" value="ECO:0000250"/>
    <property type="project" value="UniProtKB"/>
</dbReference>
<dbReference type="GO" id="GO:0051301">
    <property type="term" value="P:cell division"/>
    <property type="evidence" value="ECO:0007669"/>
    <property type="project" value="UniProtKB-KW"/>
</dbReference>
<dbReference type="GO" id="GO:0040001">
    <property type="term" value="P:establishment of mitotic spindle localization"/>
    <property type="evidence" value="ECO:0000318"/>
    <property type="project" value="GO_Central"/>
</dbReference>
<dbReference type="GO" id="GO:0010458">
    <property type="term" value="P:exit from mitosis"/>
    <property type="evidence" value="ECO:0000250"/>
    <property type="project" value="UniProtKB"/>
</dbReference>
<dbReference type="GO" id="GO:0007030">
    <property type="term" value="P:Golgi organization"/>
    <property type="evidence" value="ECO:0000250"/>
    <property type="project" value="UniProtKB"/>
</dbReference>
<dbReference type="GO" id="GO:0061484">
    <property type="term" value="P:hematopoietic stem cell homeostasis"/>
    <property type="evidence" value="ECO:0000315"/>
    <property type="project" value="ZFIN"/>
</dbReference>
<dbReference type="GO" id="GO:0034453">
    <property type="term" value="P:microtubule anchoring"/>
    <property type="evidence" value="ECO:0000250"/>
    <property type="project" value="UniProtKB"/>
</dbReference>
<dbReference type="GO" id="GO:0000226">
    <property type="term" value="P:microtubule cytoskeleton organization"/>
    <property type="evidence" value="ECO:0000250"/>
    <property type="project" value="UniProtKB"/>
</dbReference>
<dbReference type="GO" id="GO:0007020">
    <property type="term" value="P:microtubule nucleation"/>
    <property type="evidence" value="ECO:0000250"/>
    <property type="project" value="UniProtKB"/>
</dbReference>
<dbReference type="GO" id="GO:0031023">
    <property type="term" value="P:microtubule organizing center organization"/>
    <property type="evidence" value="ECO:0000250"/>
    <property type="project" value="UniProtKB"/>
</dbReference>
<dbReference type="GO" id="GO:0090307">
    <property type="term" value="P:mitotic spindle assembly"/>
    <property type="evidence" value="ECO:0000318"/>
    <property type="project" value="GO_Central"/>
</dbReference>
<dbReference type="GO" id="GO:0007052">
    <property type="term" value="P:mitotic spindle organization"/>
    <property type="evidence" value="ECO:0000250"/>
    <property type="project" value="UniProtKB"/>
</dbReference>
<dbReference type="GO" id="GO:0031110">
    <property type="term" value="P:regulation of microtubule polymerization or depolymerization"/>
    <property type="evidence" value="ECO:0000250"/>
    <property type="project" value="UniProtKB"/>
</dbReference>
<dbReference type="GO" id="GO:0032886">
    <property type="term" value="P:regulation of microtubule-based process"/>
    <property type="evidence" value="ECO:0000250"/>
    <property type="project" value="UniProtKB"/>
</dbReference>
<dbReference type="FunFam" id="1.25.10.10:FF:000001">
    <property type="entry name" value="CLIP-associating protein 1 isoform 2"/>
    <property type="match status" value="1"/>
</dbReference>
<dbReference type="FunFam" id="1.25.10.10:FF:000005">
    <property type="entry name" value="CLIP-associating protein 1 isoform 2"/>
    <property type="match status" value="1"/>
</dbReference>
<dbReference type="FunFam" id="1.25.10.10:FF:000006">
    <property type="entry name" value="CLIP-associating protein 1 isoform 2"/>
    <property type="match status" value="1"/>
</dbReference>
<dbReference type="Gene3D" id="1.25.10.10">
    <property type="entry name" value="Leucine-rich Repeat Variant"/>
    <property type="match status" value="3"/>
</dbReference>
<dbReference type="InterPro" id="IPR011989">
    <property type="entry name" value="ARM-like"/>
</dbReference>
<dbReference type="InterPro" id="IPR016024">
    <property type="entry name" value="ARM-type_fold"/>
</dbReference>
<dbReference type="InterPro" id="IPR024395">
    <property type="entry name" value="CLASP_N_dom"/>
</dbReference>
<dbReference type="InterPro" id="IPR034085">
    <property type="entry name" value="TOG"/>
</dbReference>
<dbReference type="PANTHER" id="PTHR21567">
    <property type="entry name" value="CLASP"/>
    <property type="match status" value="1"/>
</dbReference>
<dbReference type="PANTHER" id="PTHR21567:SF30">
    <property type="entry name" value="CLIP-ASSOCIATING PROTEIN 2"/>
    <property type="match status" value="1"/>
</dbReference>
<dbReference type="Pfam" id="PF12348">
    <property type="entry name" value="CLASP_N"/>
    <property type="match status" value="1"/>
</dbReference>
<dbReference type="SMART" id="SM01349">
    <property type="entry name" value="TOG"/>
    <property type="match status" value="3"/>
</dbReference>
<dbReference type="SUPFAM" id="SSF48371">
    <property type="entry name" value="ARM repeat"/>
    <property type="match status" value="1"/>
</dbReference>